<reference key="1">
    <citation type="journal article" date="2003" name="Proc. Natl. Acad. Sci. U.S.A.">
        <title>Genome sequence of the cyanobacterium Prochlorococcus marinus SS120, a nearly minimal oxyphototrophic genome.</title>
        <authorList>
            <person name="Dufresne A."/>
            <person name="Salanoubat M."/>
            <person name="Partensky F."/>
            <person name="Artiguenave F."/>
            <person name="Axmann I.M."/>
            <person name="Barbe V."/>
            <person name="Duprat S."/>
            <person name="Galperin M.Y."/>
            <person name="Koonin E.V."/>
            <person name="Le Gall F."/>
            <person name="Makarova K.S."/>
            <person name="Ostrowski M."/>
            <person name="Oztas S."/>
            <person name="Robert C."/>
            <person name="Rogozin I.B."/>
            <person name="Scanlan D.J."/>
            <person name="Tandeau de Marsac N."/>
            <person name="Weissenbach J."/>
            <person name="Wincker P."/>
            <person name="Wolf Y.I."/>
            <person name="Hess W.R."/>
        </authorList>
    </citation>
    <scope>NUCLEOTIDE SEQUENCE [LARGE SCALE GENOMIC DNA]</scope>
    <source>
        <strain>SARG / CCMP1375 / SS120</strain>
    </source>
</reference>
<evidence type="ECO:0000250" key="1"/>
<evidence type="ECO:0000255" key="2">
    <source>
        <dbReference type="HAMAP-Rule" id="MF_00118"/>
    </source>
</evidence>
<name>EFTU_PROMA</name>
<comment type="function">
    <text evidence="2">GTP hydrolase that promotes the GTP-dependent binding of aminoacyl-tRNA to the A-site of ribosomes during protein biosynthesis.</text>
</comment>
<comment type="catalytic activity">
    <reaction evidence="2">
        <text>GTP + H2O = GDP + phosphate + H(+)</text>
        <dbReference type="Rhea" id="RHEA:19669"/>
        <dbReference type="ChEBI" id="CHEBI:15377"/>
        <dbReference type="ChEBI" id="CHEBI:15378"/>
        <dbReference type="ChEBI" id="CHEBI:37565"/>
        <dbReference type="ChEBI" id="CHEBI:43474"/>
        <dbReference type="ChEBI" id="CHEBI:58189"/>
        <dbReference type="EC" id="3.6.5.3"/>
    </reaction>
    <physiologicalReaction direction="left-to-right" evidence="2">
        <dbReference type="Rhea" id="RHEA:19670"/>
    </physiologicalReaction>
</comment>
<comment type="subunit">
    <text evidence="2">Monomer.</text>
</comment>
<comment type="subcellular location">
    <subcellularLocation>
        <location evidence="2">Cytoplasm</location>
    </subcellularLocation>
</comment>
<comment type="similarity">
    <text evidence="2">Belongs to the TRAFAC class translation factor GTPase superfamily. Classic translation factor GTPase family. EF-Tu/EF-1A subfamily.</text>
</comment>
<feature type="chain" id="PRO_1000015728" description="Elongation factor Tu">
    <location>
        <begin position="1"/>
        <end position="399"/>
    </location>
</feature>
<feature type="domain" description="tr-type G">
    <location>
        <begin position="10"/>
        <end position="204"/>
    </location>
</feature>
<feature type="region of interest" description="G1" evidence="1">
    <location>
        <begin position="19"/>
        <end position="26"/>
    </location>
</feature>
<feature type="region of interest" description="G2" evidence="1">
    <location>
        <begin position="60"/>
        <end position="64"/>
    </location>
</feature>
<feature type="region of interest" description="G3" evidence="1">
    <location>
        <begin position="81"/>
        <end position="84"/>
    </location>
</feature>
<feature type="region of interest" description="G4" evidence="1">
    <location>
        <begin position="136"/>
        <end position="139"/>
    </location>
</feature>
<feature type="region of interest" description="G5" evidence="1">
    <location>
        <begin position="174"/>
        <end position="176"/>
    </location>
</feature>
<feature type="binding site" evidence="2">
    <location>
        <begin position="19"/>
        <end position="26"/>
    </location>
    <ligand>
        <name>GTP</name>
        <dbReference type="ChEBI" id="CHEBI:37565"/>
    </ligand>
</feature>
<feature type="binding site" evidence="2">
    <location>
        <position position="26"/>
    </location>
    <ligand>
        <name>Mg(2+)</name>
        <dbReference type="ChEBI" id="CHEBI:18420"/>
    </ligand>
</feature>
<feature type="binding site" evidence="2">
    <location>
        <begin position="81"/>
        <end position="85"/>
    </location>
    <ligand>
        <name>GTP</name>
        <dbReference type="ChEBI" id="CHEBI:37565"/>
    </ligand>
</feature>
<feature type="binding site" evidence="2">
    <location>
        <begin position="136"/>
        <end position="139"/>
    </location>
    <ligand>
        <name>GTP</name>
        <dbReference type="ChEBI" id="CHEBI:37565"/>
    </ligand>
</feature>
<keyword id="KW-0963">Cytoplasm</keyword>
<keyword id="KW-0251">Elongation factor</keyword>
<keyword id="KW-0342">GTP-binding</keyword>
<keyword id="KW-0378">Hydrolase</keyword>
<keyword id="KW-0460">Magnesium</keyword>
<keyword id="KW-0479">Metal-binding</keyword>
<keyword id="KW-0547">Nucleotide-binding</keyword>
<keyword id="KW-0648">Protein biosynthesis</keyword>
<keyword id="KW-1185">Reference proteome</keyword>
<gene>
    <name evidence="2" type="primary">tuf</name>
    <name type="ordered locus">Pro_1664</name>
</gene>
<protein>
    <recommendedName>
        <fullName evidence="2">Elongation factor Tu</fullName>
        <shortName evidence="2">EF-Tu</shortName>
        <ecNumber evidence="2">3.6.5.3</ecNumber>
    </recommendedName>
</protein>
<proteinExistence type="inferred from homology"/>
<sequence length="399" mass="43548">MAREKFERNKPHVNIGTIGHVDHGKTTLTAAITNVLAKKGQAQAQDYGDIDGAPEERERGITINTAHVEYETDGRHYAHVDCPGHADYVKNMITGAAQMDGAILVCAATDGPMAQTKEHILLAKQVGVPALVVALNKCDMVDDPEIIELVEMEIRELLDSYDFPGDEIPIVQVSGLKALEGDSEWEGKVEELMKAVDASIPEPEREVDKPFLMAVEDVFSITGRGTVATGRIERGKVTVGEEVEIVGIRDTRLTTVTGVEMFRKLLDEGMAGDNVGLLLRGIQKEDIERGMVLVKKGSITPHTQFEGEVYVLKKEEGGRHTPFFAGYRPQFYIRTTDVTGQITAFTADDGSSVEMVMPGDRIKMTGELICPVAIEQGMRFAIREGGRTIGAGVVSKIIK</sequence>
<dbReference type="EC" id="3.6.5.3" evidence="2"/>
<dbReference type="EMBL" id="AE017126">
    <property type="protein sequence ID" value="AAQ00708.1"/>
    <property type="molecule type" value="Genomic_DNA"/>
</dbReference>
<dbReference type="RefSeq" id="NP_876055.1">
    <property type="nucleotide sequence ID" value="NC_005042.1"/>
</dbReference>
<dbReference type="RefSeq" id="WP_011125813.1">
    <property type="nucleotide sequence ID" value="NC_005042.1"/>
</dbReference>
<dbReference type="SMR" id="Q7VA05"/>
<dbReference type="STRING" id="167539.Pro_1664"/>
<dbReference type="EnsemblBacteria" id="AAQ00708">
    <property type="protein sequence ID" value="AAQ00708"/>
    <property type="gene ID" value="Pro_1664"/>
</dbReference>
<dbReference type="KEGG" id="pma:Pro_1664"/>
<dbReference type="PATRIC" id="fig|167539.5.peg.1758"/>
<dbReference type="eggNOG" id="COG0050">
    <property type="taxonomic scope" value="Bacteria"/>
</dbReference>
<dbReference type="HOGENOM" id="CLU_007265_0_1_3"/>
<dbReference type="OrthoDB" id="9804504at2"/>
<dbReference type="Proteomes" id="UP000001420">
    <property type="component" value="Chromosome"/>
</dbReference>
<dbReference type="GO" id="GO:0005829">
    <property type="term" value="C:cytosol"/>
    <property type="evidence" value="ECO:0007669"/>
    <property type="project" value="TreeGrafter"/>
</dbReference>
<dbReference type="GO" id="GO:0005525">
    <property type="term" value="F:GTP binding"/>
    <property type="evidence" value="ECO:0007669"/>
    <property type="project" value="UniProtKB-UniRule"/>
</dbReference>
<dbReference type="GO" id="GO:0003924">
    <property type="term" value="F:GTPase activity"/>
    <property type="evidence" value="ECO:0007669"/>
    <property type="project" value="InterPro"/>
</dbReference>
<dbReference type="GO" id="GO:0003746">
    <property type="term" value="F:translation elongation factor activity"/>
    <property type="evidence" value="ECO:0007669"/>
    <property type="project" value="UniProtKB-UniRule"/>
</dbReference>
<dbReference type="CDD" id="cd01884">
    <property type="entry name" value="EF_Tu"/>
    <property type="match status" value="1"/>
</dbReference>
<dbReference type="CDD" id="cd03697">
    <property type="entry name" value="EFTU_II"/>
    <property type="match status" value="1"/>
</dbReference>
<dbReference type="CDD" id="cd03707">
    <property type="entry name" value="EFTU_III"/>
    <property type="match status" value="1"/>
</dbReference>
<dbReference type="FunFam" id="2.40.30.10:FF:000001">
    <property type="entry name" value="Elongation factor Tu"/>
    <property type="match status" value="1"/>
</dbReference>
<dbReference type="FunFam" id="2.40.30.10:FF:000046">
    <property type="entry name" value="Elongation factor Tu"/>
    <property type="match status" value="1"/>
</dbReference>
<dbReference type="FunFam" id="3.40.50.300:FF:000003">
    <property type="entry name" value="Elongation factor Tu"/>
    <property type="match status" value="1"/>
</dbReference>
<dbReference type="Gene3D" id="3.40.50.300">
    <property type="entry name" value="P-loop containing nucleotide triphosphate hydrolases"/>
    <property type="match status" value="1"/>
</dbReference>
<dbReference type="Gene3D" id="2.40.30.10">
    <property type="entry name" value="Translation factors"/>
    <property type="match status" value="2"/>
</dbReference>
<dbReference type="HAMAP" id="MF_00118_B">
    <property type="entry name" value="EF_Tu_B"/>
    <property type="match status" value="1"/>
</dbReference>
<dbReference type="InterPro" id="IPR041709">
    <property type="entry name" value="EF-Tu_GTP-bd"/>
</dbReference>
<dbReference type="InterPro" id="IPR050055">
    <property type="entry name" value="EF-Tu_GTPase"/>
</dbReference>
<dbReference type="InterPro" id="IPR004161">
    <property type="entry name" value="EFTu-like_2"/>
</dbReference>
<dbReference type="InterPro" id="IPR033720">
    <property type="entry name" value="EFTU_2"/>
</dbReference>
<dbReference type="InterPro" id="IPR031157">
    <property type="entry name" value="G_TR_CS"/>
</dbReference>
<dbReference type="InterPro" id="IPR027417">
    <property type="entry name" value="P-loop_NTPase"/>
</dbReference>
<dbReference type="InterPro" id="IPR005225">
    <property type="entry name" value="Small_GTP-bd"/>
</dbReference>
<dbReference type="InterPro" id="IPR000795">
    <property type="entry name" value="T_Tr_GTP-bd_dom"/>
</dbReference>
<dbReference type="InterPro" id="IPR009000">
    <property type="entry name" value="Transl_B-barrel_sf"/>
</dbReference>
<dbReference type="InterPro" id="IPR009001">
    <property type="entry name" value="Transl_elong_EF1A/Init_IF2_C"/>
</dbReference>
<dbReference type="InterPro" id="IPR004541">
    <property type="entry name" value="Transl_elong_EFTu/EF1A_bac/org"/>
</dbReference>
<dbReference type="InterPro" id="IPR004160">
    <property type="entry name" value="Transl_elong_EFTu/EF1A_C"/>
</dbReference>
<dbReference type="NCBIfam" id="TIGR00485">
    <property type="entry name" value="EF-Tu"/>
    <property type="match status" value="1"/>
</dbReference>
<dbReference type="NCBIfam" id="NF000766">
    <property type="entry name" value="PRK00049.1"/>
    <property type="match status" value="1"/>
</dbReference>
<dbReference type="NCBIfam" id="NF009372">
    <property type="entry name" value="PRK12735.1"/>
    <property type="match status" value="1"/>
</dbReference>
<dbReference type="NCBIfam" id="NF009373">
    <property type="entry name" value="PRK12736.1"/>
    <property type="match status" value="1"/>
</dbReference>
<dbReference type="NCBIfam" id="TIGR00231">
    <property type="entry name" value="small_GTP"/>
    <property type="match status" value="1"/>
</dbReference>
<dbReference type="PANTHER" id="PTHR43721:SF22">
    <property type="entry name" value="ELONGATION FACTOR TU, MITOCHONDRIAL"/>
    <property type="match status" value="1"/>
</dbReference>
<dbReference type="PANTHER" id="PTHR43721">
    <property type="entry name" value="ELONGATION FACTOR TU-RELATED"/>
    <property type="match status" value="1"/>
</dbReference>
<dbReference type="Pfam" id="PF00009">
    <property type="entry name" value="GTP_EFTU"/>
    <property type="match status" value="1"/>
</dbReference>
<dbReference type="Pfam" id="PF03144">
    <property type="entry name" value="GTP_EFTU_D2"/>
    <property type="match status" value="1"/>
</dbReference>
<dbReference type="Pfam" id="PF03143">
    <property type="entry name" value="GTP_EFTU_D3"/>
    <property type="match status" value="1"/>
</dbReference>
<dbReference type="PRINTS" id="PR00315">
    <property type="entry name" value="ELONGATNFCT"/>
</dbReference>
<dbReference type="SUPFAM" id="SSF50465">
    <property type="entry name" value="EF-Tu/eEF-1alpha/eIF2-gamma C-terminal domain"/>
    <property type="match status" value="1"/>
</dbReference>
<dbReference type="SUPFAM" id="SSF52540">
    <property type="entry name" value="P-loop containing nucleoside triphosphate hydrolases"/>
    <property type="match status" value="1"/>
</dbReference>
<dbReference type="SUPFAM" id="SSF50447">
    <property type="entry name" value="Translation proteins"/>
    <property type="match status" value="1"/>
</dbReference>
<dbReference type="PROSITE" id="PS00301">
    <property type="entry name" value="G_TR_1"/>
    <property type="match status" value="1"/>
</dbReference>
<dbReference type="PROSITE" id="PS51722">
    <property type="entry name" value="G_TR_2"/>
    <property type="match status" value="1"/>
</dbReference>
<organism>
    <name type="scientific">Prochlorococcus marinus (strain SARG / CCMP1375 / SS120)</name>
    <dbReference type="NCBI Taxonomy" id="167539"/>
    <lineage>
        <taxon>Bacteria</taxon>
        <taxon>Bacillati</taxon>
        <taxon>Cyanobacteriota</taxon>
        <taxon>Cyanophyceae</taxon>
        <taxon>Synechococcales</taxon>
        <taxon>Prochlorococcaceae</taxon>
        <taxon>Prochlorococcus</taxon>
    </lineage>
</organism>
<accession>Q7VA05</accession>